<proteinExistence type="inferred from homology"/>
<name>PYRB_METPB</name>
<dbReference type="EC" id="2.1.3.2" evidence="1"/>
<dbReference type="EMBL" id="CP001029">
    <property type="protein sequence ID" value="ACB81662.1"/>
    <property type="molecule type" value="Genomic_DNA"/>
</dbReference>
<dbReference type="RefSeq" id="WP_012455378.1">
    <property type="nucleotide sequence ID" value="NC_010725.1"/>
</dbReference>
<dbReference type="SMR" id="B1ZLL0"/>
<dbReference type="STRING" id="441620.Mpop_3512"/>
<dbReference type="KEGG" id="mpo:Mpop_3512"/>
<dbReference type="eggNOG" id="COG0540">
    <property type="taxonomic scope" value="Bacteria"/>
</dbReference>
<dbReference type="HOGENOM" id="CLU_043846_2_0_5"/>
<dbReference type="OrthoDB" id="9774690at2"/>
<dbReference type="UniPathway" id="UPA00070">
    <property type="reaction ID" value="UER00116"/>
</dbReference>
<dbReference type="Proteomes" id="UP000007136">
    <property type="component" value="Chromosome"/>
</dbReference>
<dbReference type="GO" id="GO:0005829">
    <property type="term" value="C:cytosol"/>
    <property type="evidence" value="ECO:0007669"/>
    <property type="project" value="TreeGrafter"/>
</dbReference>
<dbReference type="GO" id="GO:0016597">
    <property type="term" value="F:amino acid binding"/>
    <property type="evidence" value="ECO:0007669"/>
    <property type="project" value="InterPro"/>
</dbReference>
<dbReference type="GO" id="GO:0004070">
    <property type="term" value="F:aspartate carbamoyltransferase activity"/>
    <property type="evidence" value="ECO:0007669"/>
    <property type="project" value="UniProtKB-UniRule"/>
</dbReference>
<dbReference type="GO" id="GO:0006207">
    <property type="term" value="P:'de novo' pyrimidine nucleobase biosynthetic process"/>
    <property type="evidence" value="ECO:0007669"/>
    <property type="project" value="InterPro"/>
</dbReference>
<dbReference type="GO" id="GO:0044205">
    <property type="term" value="P:'de novo' UMP biosynthetic process"/>
    <property type="evidence" value="ECO:0007669"/>
    <property type="project" value="UniProtKB-UniRule"/>
</dbReference>
<dbReference type="GO" id="GO:0006520">
    <property type="term" value="P:amino acid metabolic process"/>
    <property type="evidence" value="ECO:0007669"/>
    <property type="project" value="InterPro"/>
</dbReference>
<dbReference type="FunFam" id="3.40.50.1370:FF:000007">
    <property type="entry name" value="Aspartate carbamoyltransferase"/>
    <property type="match status" value="1"/>
</dbReference>
<dbReference type="Gene3D" id="3.40.50.1370">
    <property type="entry name" value="Aspartate/ornithine carbamoyltransferase"/>
    <property type="match status" value="2"/>
</dbReference>
<dbReference type="HAMAP" id="MF_00001">
    <property type="entry name" value="Asp_carb_tr"/>
    <property type="match status" value="1"/>
</dbReference>
<dbReference type="InterPro" id="IPR006132">
    <property type="entry name" value="Asp/Orn_carbamoyltranf_P-bd"/>
</dbReference>
<dbReference type="InterPro" id="IPR006130">
    <property type="entry name" value="Asp/Orn_carbamoylTrfase"/>
</dbReference>
<dbReference type="InterPro" id="IPR036901">
    <property type="entry name" value="Asp/Orn_carbamoylTrfase_sf"/>
</dbReference>
<dbReference type="InterPro" id="IPR002082">
    <property type="entry name" value="Asp_carbamoyltransf"/>
</dbReference>
<dbReference type="InterPro" id="IPR006131">
    <property type="entry name" value="Asp_carbamoyltransf_Asp/Orn-bd"/>
</dbReference>
<dbReference type="NCBIfam" id="TIGR00670">
    <property type="entry name" value="asp_carb_tr"/>
    <property type="match status" value="1"/>
</dbReference>
<dbReference type="NCBIfam" id="NF002032">
    <property type="entry name" value="PRK00856.1"/>
    <property type="match status" value="1"/>
</dbReference>
<dbReference type="PANTHER" id="PTHR45753:SF6">
    <property type="entry name" value="ASPARTATE CARBAMOYLTRANSFERASE"/>
    <property type="match status" value="1"/>
</dbReference>
<dbReference type="PANTHER" id="PTHR45753">
    <property type="entry name" value="ORNITHINE CARBAMOYLTRANSFERASE, MITOCHONDRIAL"/>
    <property type="match status" value="1"/>
</dbReference>
<dbReference type="Pfam" id="PF00185">
    <property type="entry name" value="OTCace"/>
    <property type="match status" value="1"/>
</dbReference>
<dbReference type="Pfam" id="PF02729">
    <property type="entry name" value="OTCace_N"/>
    <property type="match status" value="1"/>
</dbReference>
<dbReference type="PRINTS" id="PR00100">
    <property type="entry name" value="AOTCASE"/>
</dbReference>
<dbReference type="PRINTS" id="PR00101">
    <property type="entry name" value="ATCASE"/>
</dbReference>
<dbReference type="SUPFAM" id="SSF53671">
    <property type="entry name" value="Aspartate/ornithine carbamoyltransferase"/>
    <property type="match status" value="1"/>
</dbReference>
<dbReference type="PROSITE" id="PS00097">
    <property type="entry name" value="CARBAMOYLTRANSFERASE"/>
    <property type="match status" value="1"/>
</dbReference>
<keyword id="KW-0665">Pyrimidine biosynthesis</keyword>
<keyword id="KW-0808">Transferase</keyword>
<evidence type="ECO:0000255" key="1">
    <source>
        <dbReference type="HAMAP-Rule" id="MF_00001"/>
    </source>
</evidence>
<gene>
    <name evidence="1" type="primary">pyrB</name>
    <name type="ordered locus">Mpop_3512</name>
</gene>
<accession>B1ZLL0</accession>
<organism>
    <name type="scientific">Methylorubrum populi (strain ATCC BAA-705 / NCIMB 13946 / BJ001)</name>
    <name type="common">Methylobacterium populi</name>
    <dbReference type="NCBI Taxonomy" id="441620"/>
    <lineage>
        <taxon>Bacteria</taxon>
        <taxon>Pseudomonadati</taxon>
        <taxon>Pseudomonadota</taxon>
        <taxon>Alphaproteobacteria</taxon>
        <taxon>Hyphomicrobiales</taxon>
        <taxon>Methylobacteriaceae</taxon>
        <taxon>Methylorubrum</taxon>
    </lineage>
</organism>
<sequence>MTAQTAPAFPHRHLLGIEGLSRPDIESLLERADAAVALSRQVEKKRTTLRGRTQINLFFEPSTRTQSSFELAGKRLGADVMNMSVASSSVKKGETLIDTAATLNAMRPDIIVVRHHAAGAVHLLARKVDCAVVNAGDGAHEHPTQALLDALTIRRNKGGIEGLTVAICGDVLHSRVARSNIILLQALGARVRVIGPSTLLPTGIERFGVEVFTNMREGLKGCDIVMMLRLQRERMNGSFVPSVKEYFRYYGLDGDKLALAKPDALVMHPGPMNRGVEIASDIADGAQSLIREQVEMGVAVRMAVLEALATHLPNG</sequence>
<feature type="chain" id="PRO_1000191911" description="Aspartate carbamoyltransferase catalytic subunit">
    <location>
        <begin position="1"/>
        <end position="315"/>
    </location>
</feature>
<feature type="binding site" evidence="1">
    <location>
        <position position="64"/>
    </location>
    <ligand>
        <name>carbamoyl phosphate</name>
        <dbReference type="ChEBI" id="CHEBI:58228"/>
    </ligand>
</feature>
<feature type="binding site" evidence="1">
    <location>
        <position position="65"/>
    </location>
    <ligand>
        <name>carbamoyl phosphate</name>
        <dbReference type="ChEBI" id="CHEBI:58228"/>
    </ligand>
</feature>
<feature type="binding site" evidence="1">
    <location>
        <position position="92"/>
    </location>
    <ligand>
        <name>L-aspartate</name>
        <dbReference type="ChEBI" id="CHEBI:29991"/>
    </ligand>
</feature>
<feature type="binding site" evidence="1">
    <location>
        <position position="114"/>
    </location>
    <ligand>
        <name>carbamoyl phosphate</name>
        <dbReference type="ChEBI" id="CHEBI:58228"/>
    </ligand>
</feature>
<feature type="binding site" evidence="1">
    <location>
        <position position="142"/>
    </location>
    <ligand>
        <name>carbamoyl phosphate</name>
        <dbReference type="ChEBI" id="CHEBI:58228"/>
    </ligand>
</feature>
<feature type="binding site" evidence="1">
    <location>
        <position position="145"/>
    </location>
    <ligand>
        <name>carbamoyl phosphate</name>
        <dbReference type="ChEBI" id="CHEBI:58228"/>
    </ligand>
</feature>
<feature type="binding site" evidence="1">
    <location>
        <position position="175"/>
    </location>
    <ligand>
        <name>L-aspartate</name>
        <dbReference type="ChEBI" id="CHEBI:29991"/>
    </ligand>
</feature>
<feature type="binding site" evidence="1">
    <location>
        <position position="229"/>
    </location>
    <ligand>
        <name>L-aspartate</name>
        <dbReference type="ChEBI" id="CHEBI:29991"/>
    </ligand>
</feature>
<feature type="binding site" evidence="1">
    <location>
        <position position="270"/>
    </location>
    <ligand>
        <name>carbamoyl phosphate</name>
        <dbReference type="ChEBI" id="CHEBI:58228"/>
    </ligand>
</feature>
<feature type="binding site" evidence="1">
    <location>
        <position position="271"/>
    </location>
    <ligand>
        <name>carbamoyl phosphate</name>
        <dbReference type="ChEBI" id="CHEBI:58228"/>
    </ligand>
</feature>
<reference key="1">
    <citation type="submission" date="2008-04" db="EMBL/GenBank/DDBJ databases">
        <title>Complete sequence of chromosome of Methylobacterium populi BJ001.</title>
        <authorList>
            <consortium name="US DOE Joint Genome Institute"/>
            <person name="Copeland A."/>
            <person name="Lucas S."/>
            <person name="Lapidus A."/>
            <person name="Glavina del Rio T."/>
            <person name="Dalin E."/>
            <person name="Tice H."/>
            <person name="Bruce D."/>
            <person name="Goodwin L."/>
            <person name="Pitluck S."/>
            <person name="Chertkov O."/>
            <person name="Brettin T."/>
            <person name="Detter J.C."/>
            <person name="Han C."/>
            <person name="Kuske C.R."/>
            <person name="Schmutz J."/>
            <person name="Larimer F."/>
            <person name="Land M."/>
            <person name="Hauser L."/>
            <person name="Kyrpides N."/>
            <person name="Mikhailova N."/>
            <person name="Marx C."/>
            <person name="Richardson P."/>
        </authorList>
    </citation>
    <scope>NUCLEOTIDE SEQUENCE [LARGE SCALE GENOMIC DNA]</scope>
    <source>
        <strain>ATCC BAA-705 / NCIMB 13946 / BJ001</strain>
    </source>
</reference>
<comment type="function">
    <text evidence="1">Catalyzes the condensation of carbamoyl phosphate and aspartate to form carbamoyl aspartate and inorganic phosphate, the committed step in the de novo pyrimidine nucleotide biosynthesis pathway.</text>
</comment>
<comment type="catalytic activity">
    <reaction evidence="1">
        <text>carbamoyl phosphate + L-aspartate = N-carbamoyl-L-aspartate + phosphate + H(+)</text>
        <dbReference type="Rhea" id="RHEA:20013"/>
        <dbReference type="ChEBI" id="CHEBI:15378"/>
        <dbReference type="ChEBI" id="CHEBI:29991"/>
        <dbReference type="ChEBI" id="CHEBI:32814"/>
        <dbReference type="ChEBI" id="CHEBI:43474"/>
        <dbReference type="ChEBI" id="CHEBI:58228"/>
        <dbReference type="EC" id="2.1.3.2"/>
    </reaction>
</comment>
<comment type="pathway">
    <text evidence="1">Pyrimidine metabolism; UMP biosynthesis via de novo pathway; (S)-dihydroorotate from bicarbonate: step 2/3.</text>
</comment>
<comment type="subunit">
    <text evidence="1">Heterododecamer (2C3:3R2) of six catalytic PyrB chains organized as two trimers (C3), and six regulatory PyrI chains organized as three dimers (R2).</text>
</comment>
<comment type="similarity">
    <text evidence="1">Belongs to the aspartate/ornithine carbamoyltransferase superfamily. ATCase family.</text>
</comment>
<protein>
    <recommendedName>
        <fullName evidence="1">Aspartate carbamoyltransferase catalytic subunit</fullName>
        <ecNumber evidence="1">2.1.3.2</ecNumber>
    </recommendedName>
    <alternativeName>
        <fullName evidence="1">Aspartate transcarbamylase</fullName>
        <shortName evidence="1">ATCase</shortName>
    </alternativeName>
</protein>